<gene>
    <name type="primary">CAV1</name>
</gene>
<protein>
    <recommendedName>
        <fullName>Caveolin-1</fullName>
    </recommendedName>
</protein>
<keyword id="KW-0007">Acetylation</keyword>
<keyword id="KW-1003">Cell membrane</keyword>
<keyword id="KW-0333">Golgi apparatus</keyword>
<keyword id="KW-1017">Isopeptide bond</keyword>
<keyword id="KW-0449">Lipoprotein</keyword>
<keyword id="KW-0472">Membrane</keyword>
<keyword id="KW-0564">Palmitate</keyword>
<keyword id="KW-0597">Phosphoprotein</keyword>
<keyword id="KW-1185">Reference proteome</keyword>
<keyword id="KW-0832">Ubl conjugation</keyword>
<accession>Q2QLH7</accession>
<evidence type="ECO:0000250" key="1"/>
<evidence type="ECO:0000250" key="2">
    <source>
        <dbReference type="UniProtKB" id="P41350"/>
    </source>
</evidence>
<evidence type="ECO:0000250" key="3">
    <source>
        <dbReference type="UniProtKB" id="P49817"/>
    </source>
</evidence>
<evidence type="ECO:0000250" key="4">
    <source>
        <dbReference type="UniProtKB" id="Q03135"/>
    </source>
</evidence>
<evidence type="ECO:0000250" key="5">
    <source>
        <dbReference type="UniProtKB" id="Q2IBA5"/>
    </source>
</evidence>
<evidence type="ECO:0000255" key="6"/>
<evidence type="ECO:0000305" key="7"/>
<comment type="function">
    <text evidence="3 4">May act as a scaffolding protein within caveolar membranes. Forms a stable heterooligomeric complex with CAV2 that targets to lipid rafts and drives caveolae formation. Mediates the recruitment of CAVIN proteins (CAVIN1/2/3/4) to the caveolae (By similarity). Interacts directly with G-protein alpha subunits and can functionally regulate their activity (By similarity). Involved in the costimulatory signal essential for T-cell receptor (TCR)-mediated T-cell activation. Its binding to DPP4 induces T-cell proliferation and NF-kappa-B activation in a T-cell receptor/CD3-dependent manner (By similarity). Recruits CTNNB1 to caveolar membranes and may regulate CTNNB1-mediated signaling through the Wnt pathway (By similarity). Negatively regulates TGFB1-mediated activation of SMAD2/3 by mediating the internalization of TGFBR1 from membrane rafts leading to its subsequent degradation (By similarity). Binds 20(S)-hydroxycholesterol (20(S)-OHC) (By similarity).</text>
</comment>
<comment type="subunit">
    <text evidence="2 3 4 5">Homooligomer. Interacts (via the N-terminus) with DPP4; the interaction is direct. Forms a stable heterooligomeric complex with CAV2 that targets to lipid rafts and drives caveolae formation. Interacts with PACSIN2; this interaction induces membrane tubulation (By similarity). Interacts with BMX, BTK, CTNNB1, CDH1, GLIPR2, JUP, NOSTRIN, SNAP25 and STX1A. Interacts with SLC7A9. Interacts with TGFBR1. Interacts with CAVIN3 (via leucine-zipper domain) in a cholesterol-sensitive manner. Interacts with CAVIN1. Interacts with EHD2 in a cholesterol-dependent manner. Forms a ternary complex with UBXN6 and VCP; mediates CAV1 targeting to lysosomes for degradation. Interacts with ABCG1; this interaction regulates ABCG1-mediated cholesterol efflux (By similarity). Interacts with NEU3; this interaction enhances NEU3 sialidase activity within caveola. Interacts (via C-terminus) with SPRY1, SPRY2 (via C-terminus), SPRY3, and SPRY4 (By similarity).</text>
</comment>
<comment type="subcellular location">
    <subcellularLocation>
        <location evidence="1">Golgi apparatus membrane</location>
        <topology evidence="1">Peripheral membrane protein</topology>
    </subcellularLocation>
    <subcellularLocation>
        <location evidence="1">Cell membrane</location>
        <topology evidence="1">Peripheral membrane protein</topology>
    </subcellularLocation>
    <subcellularLocation>
        <location evidence="3">Membrane</location>
        <location evidence="3">Caveola</location>
        <topology evidence="1">Peripheral membrane protein</topology>
    </subcellularLocation>
    <subcellularLocation>
        <location evidence="4">Membrane raft</location>
    </subcellularLocation>
    <text evidence="1">Colocalized with DPP4 in membrane rafts. Potential hairpin-like structure in the membrane. Membrane protein of caveolae (By similarity).</text>
</comment>
<comment type="PTM">
    <text evidence="4">Phosphorylated at Tyr-14 by ABL1 in response to oxidative stress.</text>
</comment>
<comment type="PTM">
    <text evidence="4">Ubiquitinated. Undergo monoubiquitination and multi- and/or polyubiquitination. Monoubiquitination of N-terminal lysines promotes integration in a ternary complex with UBXN6 and VCP which promotes oligomeric CAV1 targeting to lysosomes for degradation. Ubiquitinated by ZNRF1; leading to degradation and modulation of the TLR4-mediated immune response.</text>
</comment>
<comment type="similarity">
    <text evidence="7">Belongs to the caveolin family.</text>
</comment>
<dbReference type="EMBL" id="DP000013">
    <property type="protein sequence ID" value="ABA90401.1"/>
    <property type="molecule type" value="Genomic_DNA"/>
</dbReference>
<dbReference type="RefSeq" id="XP_003789848.1">
    <property type="nucleotide sequence ID" value="XM_003789800.2"/>
</dbReference>
<dbReference type="SMR" id="Q2QLH7"/>
<dbReference type="FunCoup" id="Q2QLH7">
    <property type="interactions" value="1823"/>
</dbReference>
<dbReference type="STRING" id="30611.ENSOGAP00000012782"/>
<dbReference type="Ensembl" id="ENSOGAT00000014266.2">
    <property type="protein sequence ID" value="ENSOGAP00000012782.2"/>
    <property type="gene ID" value="ENSOGAG00000014265.2"/>
</dbReference>
<dbReference type="GeneID" id="100948513"/>
<dbReference type="KEGG" id="oga:100948513"/>
<dbReference type="CTD" id="857"/>
<dbReference type="eggNOG" id="ENOG502QUK5">
    <property type="taxonomic scope" value="Eukaryota"/>
</dbReference>
<dbReference type="GeneTree" id="ENSGT00950000183006"/>
<dbReference type="HOGENOM" id="CLU_102582_0_0_1"/>
<dbReference type="InParanoid" id="Q2QLH7"/>
<dbReference type="OMA" id="MSGSKYV"/>
<dbReference type="OrthoDB" id="5917823at2759"/>
<dbReference type="TreeFam" id="TF315736"/>
<dbReference type="Proteomes" id="UP000005225">
    <property type="component" value="Unassembled WGS sequence"/>
</dbReference>
<dbReference type="GO" id="GO:0002080">
    <property type="term" value="C:acrosomal membrane"/>
    <property type="evidence" value="ECO:0007669"/>
    <property type="project" value="Ensembl"/>
</dbReference>
<dbReference type="GO" id="GO:0005901">
    <property type="term" value="C:caveola"/>
    <property type="evidence" value="ECO:0000250"/>
    <property type="project" value="UniProtKB"/>
</dbReference>
<dbReference type="GO" id="GO:0002095">
    <property type="term" value="C:caveolar macromolecular signaling complex"/>
    <property type="evidence" value="ECO:0007669"/>
    <property type="project" value="Ensembl"/>
</dbReference>
<dbReference type="GO" id="GO:0005938">
    <property type="term" value="C:cell cortex"/>
    <property type="evidence" value="ECO:0007669"/>
    <property type="project" value="Ensembl"/>
</dbReference>
<dbReference type="GO" id="GO:0005929">
    <property type="term" value="C:cilium"/>
    <property type="evidence" value="ECO:0007669"/>
    <property type="project" value="Ensembl"/>
</dbReference>
<dbReference type="GO" id="GO:0005783">
    <property type="term" value="C:endoplasmic reticulum"/>
    <property type="evidence" value="ECO:0007669"/>
    <property type="project" value="Ensembl"/>
</dbReference>
<dbReference type="GO" id="GO:0005768">
    <property type="term" value="C:endosome"/>
    <property type="evidence" value="ECO:0000250"/>
    <property type="project" value="UniProtKB"/>
</dbReference>
<dbReference type="GO" id="GO:0005925">
    <property type="term" value="C:focal adhesion"/>
    <property type="evidence" value="ECO:0007669"/>
    <property type="project" value="Ensembl"/>
</dbReference>
<dbReference type="GO" id="GO:0000139">
    <property type="term" value="C:Golgi membrane"/>
    <property type="evidence" value="ECO:0007669"/>
    <property type="project" value="UniProtKB-SubCell"/>
</dbReference>
<dbReference type="GO" id="GO:0045121">
    <property type="term" value="C:membrane raft"/>
    <property type="evidence" value="ECO:0000250"/>
    <property type="project" value="UniProtKB"/>
</dbReference>
<dbReference type="GO" id="GO:0048471">
    <property type="term" value="C:perinuclear region of cytoplasm"/>
    <property type="evidence" value="ECO:0007669"/>
    <property type="project" value="Ensembl"/>
</dbReference>
<dbReference type="GO" id="GO:0042383">
    <property type="term" value="C:sarcolemma"/>
    <property type="evidence" value="ECO:0007669"/>
    <property type="project" value="TreeGrafter"/>
</dbReference>
<dbReference type="GO" id="GO:0051117">
    <property type="term" value="F:ATPase binding"/>
    <property type="evidence" value="ECO:0007669"/>
    <property type="project" value="Ensembl"/>
</dbReference>
<dbReference type="GO" id="GO:0042802">
    <property type="term" value="F:identical protein binding"/>
    <property type="evidence" value="ECO:0007669"/>
    <property type="project" value="Ensembl"/>
</dbReference>
<dbReference type="GO" id="GO:0070320">
    <property type="term" value="F:inward rectifier potassium channel inhibitor activity"/>
    <property type="evidence" value="ECO:0007669"/>
    <property type="project" value="Ensembl"/>
</dbReference>
<dbReference type="GO" id="GO:0050998">
    <property type="term" value="F:nitric-oxide synthase binding"/>
    <property type="evidence" value="ECO:0007669"/>
    <property type="project" value="Ensembl"/>
</dbReference>
<dbReference type="GO" id="GO:0008142">
    <property type="term" value="F:oxysterol binding"/>
    <property type="evidence" value="ECO:0000250"/>
    <property type="project" value="UniProtKB"/>
</dbReference>
<dbReference type="GO" id="GO:0016504">
    <property type="term" value="F:peptidase activator activity"/>
    <property type="evidence" value="ECO:0007669"/>
    <property type="project" value="Ensembl"/>
</dbReference>
<dbReference type="GO" id="GO:0046982">
    <property type="term" value="F:protein heterodimerization activity"/>
    <property type="evidence" value="ECO:0007669"/>
    <property type="project" value="Ensembl"/>
</dbReference>
<dbReference type="GO" id="GO:0019901">
    <property type="term" value="F:protein kinase binding"/>
    <property type="evidence" value="ECO:0007669"/>
    <property type="project" value="Ensembl"/>
</dbReference>
<dbReference type="GO" id="GO:0030292">
    <property type="term" value="F:protein tyrosine kinase inhibitor activity"/>
    <property type="evidence" value="ECO:0007669"/>
    <property type="project" value="Ensembl"/>
</dbReference>
<dbReference type="GO" id="GO:0044877">
    <property type="term" value="F:protein-containing complex binding"/>
    <property type="evidence" value="ECO:0007669"/>
    <property type="project" value="Ensembl"/>
</dbReference>
<dbReference type="GO" id="GO:0030674">
    <property type="term" value="F:protein-macromolecule adaptor activity"/>
    <property type="evidence" value="ECO:0007669"/>
    <property type="project" value="Ensembl"/>
</dbReference>
<dbReference type="GO" id="GO:0005102">
    <property type="term" value="F:signaling receptor binding"/>
    <property type="evidence" value="ECO:0007669"/>
    <property type="project" value="Ensembl"/>
</dbReference>
<dbReference type="GO" id="GO:0031267">
    <property type="term" value="F:small GTPase binding"/>
    <property type="evidence" value="ECO:0007669"/>
    <property type="project" value="Ensembl"/>
</dbReference>
<dbReference type="GO" id="GO:0044325">
    <property type="term" value="F:transmembrane transporter binding"/>
    <property type="evidence" value="ECO:0007669"/>
    <property type="project" value="Ensembl"/>
</dbReference>
<dbReference type="GO" id="GO:0001525">
    <property type="term" value="P:angiogenesis"/>
    <property type="evidence" value="ECO:0007669"/>
    <property type="project" value="Ensembl"/>
</dbReference>
<dbReference type="GO" id="GO:0038166">
    <property type="term" value="P:angiotensin-activated signaling pathway"/>
    <property type="evidence" value="ECO:0007669"/>
    <property type="project" value="Ensembl"/>
</dbReference>
<dbReference type="GO" id="GO:0097190">
    <property type="term" value="P:apoptotic signaling pathway"/>
    <property type="evidence" value="ECO:0007669"/>
    <property type="project" value="Ensembl"/>
</dbReference>
<dbReference type="GO" id="GO:0071711">
    <property type="term" value="P:basement membrane organization"/>
    <property type="evidence" value="ECO:0007669"/>
    <property type="project" value="Ensembl"/>
</dbReference>
<dbReference type="GO" id="GO:0006816">
    <property type="term" value="P:calcium ion transport"/>
    <property type="evidence" value="ECO:0007669"/>
    <property type="project" value="Ensembl"/>
</dbReference>
<dbReference type="GO" id="GO:0060070">
    <property type="term" value="P:canonical Wnt signaling pathway"/>
    <property type="evidence" value="ECO:0007669"/>
    <property type="project" value="Ensembl"/>
</dbReference>
<dbReference type="GO" id="GO:0070836">
    <property type="term" value="P:caveola assembly"/>
    <property type="evidence" value="ECO:0007669"/>
    <property type="project" value="Ensembl"/>
</dbReference>
<dbReference type="GO" id="GO:0072584">
    <property type="term" value="P:caveolin-mediated endocytosis"/>
    <property type="evidence" value="ECO:0007669"/>
    <property type="project" value="Ensembl"/>
</dbReference>
<dbReference type="GO" id="GO:0071360">
    <property type="term" value="P:cellular response to exogenous dsRNA"/>
    <property type="evidence" value="ECO:0007669"/>
    <property type="project" value="Ensembl"/>
</dbReference>
<dbReference type="GO" id="GO:0071455">
    <property type="term" value="P:cellular response to hyperoxia"/>
    <property type="evidence" value="ECO:0007669"/>
    <property type="project" value="Ensembl"/>
</dbReference>
<dbReference type="GO" id="GO:0071218">
    <property type="term" value="P:cellular response to misfolded protein"/>
    <property type="evidence" value="ECO:0007669"/>
    <property type="project" value="Ensembl"/>
</dbReference>
<dbReference type="GO" id="GO:0071560">
    <property type="term" value="P:cellular response to transforming growth factor beta stimulus"/>
    <property type="evidence" value="ECO:0007669"/>
    <property type="project" value="Ensembl"/>
</dbReference>
<dbReference type="GO" id="GO:0042632">
    <property type="term" value="P:cholesterol homeostasis"/>
    <property type="evidence" value="ECO:0007669"/>
    <property type="project" value="Ensembl"/>
</dbReference>
<dbReference type="GO" id="GO:0019221">
    <property type="term" value="P:cytokine-mediated signaling pathway"/>
    <property type="evidence" value="ECO:0007669"/>
    <property type="project" value="Ensembl"/>
</dbReference>
<dbReference type="GO" id="GO:0001935">
    <property type="term" value="P:endothelial cell proliferation"/>
    <property type="evidence" value="ECO:0007669"/>
    <property type="project" value="Ensembl"/>
</dbReference>
<dbReference type="GO" id="GO:0051649">
    <property type="term" value="P:establishment of localization in cell"/>
    <property type="evidence" value="ECO:0007669"/>
    <property type="project" value="Ensembl"/>
</dbReference>
<dbReference type="GO" id="GO:0048144">
    <property type="term" value="P:fibroblast proliferation"/>
    <property type="evidence" value="ECO:0007669"/>
    <property type="project" value="Ensembl"/>
</dbReference>
<dbReference type="GO" id="GO:0002067">
    <property type="term" value="P:glandular epithelial cell differentiation"/>
    <property type="evidence" value="ECO:0007669"/>
    <property type="project" value="Ensembl"/>
</dbReference>
<dbReference type="GO" id="GO:0038016">
    <property type="term" value="P:insulin receptor internalization"/>
    <property type="evidence" value="ECO:0007669"/>
    <property type="project" value="Ensembl"/>
</dbReference>
<dbReference type="GO" id="GO:0033484">
    <property type="term" value="P:intracellular nitric oxide homeostasis"/>
    <property type="evidence" value="ECO:0007669"/>
    <property type="project" value="Ensembl"/>
</dbReference>
<dbReference type="GO" id="GO:0007595">
    <property type="term" value="P:lactation"/>
    <property type="evidence" value="ECO:0007669"/>
    <property type="project" value="Ensembl"/>
</dbReference>
<dbReference type="GO" id="GO:0019915">
    <property type="term" value="P:lipid storage"/>
    <property type="evidence" value="ECO:0007669"/>
    <property type="project" value="Ensembl"/>
</dbReference>
<dbReference type="GO" id="GO:0060056">
    <property type="term" value="P:mammary gland involution"/>
    <property type="evidence" value="ECO:0007669"/>
    <property type="project" value="Ensembl"/>
</dbReference>
<dbReference type="GO" id="GO:0000165">
    <property type="term" value="P:MAPK cascade"/>
    <property type="evidence" value="ECO:0007669"/>
    <property type="project" value="Ensembl"/>
</dbReference>
<dbReference type="GO" id="GO:0051899">
    <property type="term" value="P:membrane depolarization"/>
    <property type="evidence" value="ECO:0007669"/>
    <property type="project" value="Ensembl"/>
</dbReference>
<dbReference type="GO" id="GO:0046716">
    <property type="term" value="P:muscle cell cellular homeostasis"/>
    <property type="evidence" value="ECO:0007669"/>
    <property type="project" value="Ensembl"/>
</dbReference>
<dbReference type="GO" id="GO:2000811">
    <property type="term" value="P:negative regulation of anoikis"/>
    <property type="evidence" value="ECO:0007669"/>
    <property type="project" value="Ensembl"/>
</dbReference>
<dbReference type="GO" id="GO:0090090">
    <property type="term" value="P:negative regulation of canonical Wnt signaling pathway"/>
    <property type="evidence" value="ECO:0007669"/>
    <property type="project" value="Ensembl"/>
</dbReference>
<dbReference type="GO" id="GO:0001960">
    <property type="term" value="P:negative regulation of cytokine-mediated signaling pathway"/>
    <property type="evidence" value="ECO:0007669"/>
    <property type="project" value="Ensembl"/>
</dbReference>
<dbReference type="GO" id="GO:0001937">
    <property type="term" value="P:negative regulation of endothelial cell proliferation"/>
    <property type="evidence" value="ECO:0007669"/>
    <property type="project" value="Ensembl"/>
</dbReference>
<dbReference type="GO" id="GO:0030857">
    <property type="term" value="P:negative regulation of epithelial cell differentiation"/>
    <property type="evidence" value="ECO:0007669"/>
    <property type="project" value="Ensembl"/>
</dbReference>
<dbReference type="GO" id="GO:0048147">
    <property type="term" value="P:negative regulation of fibroblast proliferation"/>
    <property type="evidence" value="ECO:0007669"/>
    <property type="project" value="Ensembl"/>
</dbReference>
<dbReference type="GO" id="GO:0043409">
    <property type="term" value="P:negative regulation of MAPK cascade"/>
    <property type="evidence" value="ECO:0007669"/>
    <property type="project" value="Ensembl"/>
</dbReference>
<dbReference type="GO" id="GO:0060546">
    <property type="term" value="P:negative regulation of necroptotic process"/>
    <property type="evidence" value="ECO:0007669"/>
    <property type="project" value="Ensembl"/>
</dbReference>
<dbReference type="GO" id="GO:0045019">
    <property type="term" value="P:negative regulation of nitric oxide biosynthetic process"/>
    <property type="evidence" value="ECO:0007669"/>
    <property type="project" value="Ensembl"/>
</dbReference>
<dbReference type="GO" id="GO:0048550">
    <property type="term" value="P:negative regulation of pinocytosis"/>
    <property type="evidence" value="ECO:0007669"/>
    <property type="project" value="Ensembl"/>
</dbReference>
<dbReference type="GO" id="GO:1901380">
    <property type="term" value="P:negative regulation of potassium ion transmembrane transport"/>
    <property type="evidence" value="ECO:0007669"/>
    <property type="project" value="Ensembl"/>
</dbReference>
<dbReference type="GO" id="GO:0031397">
    <property type="term" value="P:negative regulation of protein ubiquitination"/>
    <property type="evidence" value="ECO:0007669"/>
    <property type="project" value="Ensembl"/>
</dbReference>
<dbReference type="GO" id="GO:0046426">
    <property type="term" value="P:negative regulation of receptor signaling pathway via JAK-STAT"/>
    <property type="evidence" value="ECO:0007669"/>
    <property type="project" value="Ensembl"/>
</dbReference>
<dbReference type="GO" id="GO:0000122">
    <property type="term" value="P:negative regulation of transcription by RNA polymerase II"/>
    <property type="evidence" value="ECO:0007669"/>
    <property type="project" value="Ensembl"/>
</dbReference>
<dbReference type="GO" id="GO:0006809">
    <property type="term" value="P:nitric oxide biosynthetic process"/>
    <property type="evidence" value="ECO:0007669"/>
    <property type="project" value="Ensembl"/>
</dbReference>
<dbReference type="GO" id="GO:0010524">
    <property type="term" value="P:positive regulation of calcium ion transport into cytosol"/>
    <property type="evidence" value="ECO:0007669"/>
    <property type="project" value="Ensembl"/>
</dbReference>
<dbReference type="GO" id="GO:0043123">
    <property type="term" value="P:positive regulation of canonical NF-kappaB signal transduction"/>
    <property type="evidence" value="ECO:0007669"/>
    <property type="project" value="Ensembl"/>
</dbReference>
<dbReference type="GO" id="GO:0060355">
    <property type="term" value="P:positive regulation of cell adhesion molecule production"/>
    <property type="evidence" value="ECO:0007669"/>
    <property type="project" value="Ensembl"/>
</dbReference>
<dbReference type="GO" id="GO:0030335">
    <property type="term" value="P:positive regulation of cell migration"/>
    <property type="evidence" value="ECO:0007669"/>
    <property type="project" value="Ensembl"/>
</dbReference>
<dbReference type="GO" id="GO:0010875">
    <property type="term" value="P:positive regulation of cholesterol efflux"/>
    <property type="evidence" value="ECO:0007669"/>
    <property type="project" value="Ensembl"/>
</dbReference>
<dbReference type="GO" id="GO:0120162">
    <property type="term" value="P:positive regulation of cold-induced thermogenesis"/>
    <property type="evidence" value="ECO:0007669"/>
    <property type="project" value="Ensembl"/>
</dbReference>
<dbReference type="GO" id="GO:1904294">
    <property type="term" value="P:positive regulation of ERAD pathway"/>
    <property type="evidence" value="ECO:0007669"/>
    <property type="project" value="Ensembl"/>
</dbReference>
<dbReference type="GO" id="GO:2001238">
    <property type="term" value="P:positive regulation of extrinsic apoptotic signaling pathway"/>
    <property type="evidence" value="ECO:0007669"/>
    <property type="project" value="Ensembl"/>
</dbReference>
<dbReference type="GO" id="GO:1903598">
    <property type="term" value="P:positive regulation of gap junction assembly"/>
    <property type="evidence" value="ECO:0007669"/>
    <property type="project" value="Ensembl"/>
</dbReference>
<dbReference type="GO" id="GO:0010628">
    <property type="term" value="P:positive regulation of gene expression"/>
    <property type="evidence" value="ECO:0007669"/>
    <property type="project" value="Ensembl"/>
</dbReference>
<dbReference type="GO" id="GO:2001244">
    <property type="term" value="P:positive regulation of intrinsic apoptotic signaling pathway"/>
    <property type="evidence" value="ECO:0007669"/>
    <property type="project" value="Ensembl"/>
</dbReference>
<dbReference type="GO" id="GO:0031398">
    <property type="term" value="P:positive regulation of protein ubiquitination"/>
    <property type="evidence" value="ECO:0007669"/>
    <property type="project" value="Ensembl"/>
</dbReference>
<dbReference type="GO" id="GO:0034141">
    <property type="term" value="P:positive regulation of toll-like receptor 3 signaling pathway"/>
    <property type="evidence" value="ECO:0007669"/>
    <property type="project" value="Ensembl"/>
</dbReference>
<dbReference type="GO" id="GO:0045907">
    <property type="term" value="P:positive regulation of vasoconstriction"/>
    <property type="evidence" value="ECO:0007669"/>
    <property type="project" value="Ensembl"/>
</dbReference>
<dbReference type="GO" id="GO:0010608">
    <property type="term" value="P:post-transcriptional regulation of gene expression"/>
    <property type="evidence" value="ECO:0007669"/>
    <property type="project" value="Ensembl"/>
</dbReference>
<dbReference type="GO" id="GO:0015031">
    <property type="term" value="P:protein transport"/>
    <property type="evidence" value="ECO:0007669"/>
    <property type="project" value="Ensembl"/>
</dbReference>
<dbReference type="GO" id="GO:0031623">
    <property type="term" value="P:receptor internalization"/>
    <property type="evidence" value="ECO:0000250"/>
    <property type="project" value="UniProtKB"/>
</dbReference>
<dbReference type="GO" id="GO:0019065">
    <property type="term" value="P:receptor-mediated endocytosis of virus by host cell"/>
    <property type="evidence" value="ECO:0007669"/>
    <property type="project" value="Ensembl"/>
</dbReference>
<dbReference type="GO" id="GO:0030193">
    <property type="term" value="P:regulation of blood coagulation"/>
    <property type="evidence" value="ECO:0007669"/>
    <property type="project" value="Ensembl"/>
</dbReference>
<dbReference type="GO" id="GO:1901844">
    <property type="term" value="P:regulation of cell communication by electrical coupling involved in cardiac conduction"/>
    <property type="evidence" value="ECO:0007669"/>
    <property type="project" value="Ensembl"/>
</dbReference>
<dbReference type="GO" id="GO:0051480">
    <property type="term" value="P:regulation of cytosolic calcium ion concentration"/>
    <property type="evidence" value="ECO:0007669"/>
    <property type="project" value="Ensembl"/>
</dbReference>
<dbReference type="GO" id="GO:2000535">
    <property type="term" value="P:regulation of entry of bacterium into host cell"/>
    <property type="evidence" value="ECO:0007669"/>
    <property type="project" value="Ensembl"/>
</dbReference>
<dbReference type="GO" id="GO:0019217">
    <property type="term" value="P:regulation of fatty acid metabolic process"/>
    <property type="evidence" value="ECO:0007669"/>
    <property type="project" value="Ensembl"/>
</dbReference>
<dbReference type="GO" id="GO:0086091">
    <property type="term" value="P:regulation of heart rate by cardiac conduction"/>
    <property type="evidence" value="ECO:0007669"/>
    <property type="project" value="Ensembl"/>
</dbReference>
<dbReference type="GO" id="GO:0098903">
    <property type="term" value="P:regulation of membrane repolarization during action potential"/>
    <property type="evidence" value="ECO:0007669"/>
    <property type="project" value="Ensembl"/>
</dbReference>
<dbReference type="GO" id="GO:1900027">
    <property type="term" value="P:regulation of ruffle assembly"/>
    <property type="evidence" value="ECO:0007669"/>
    <property type="project" value="Ensembl"/>
</dbReference>
<dbReference type="GO" id="GO:0006940">
    <property type="term" value="P:regulation of smooth muscle contraction"/>
    <property type="evidence" value="ECO:0007669"/>
    <property type="project" value="Ensembl"/>
</dbReference>
<dbReference type="GO" id="GO:0003057">
    <property type="term" value="P:regulation of the force of heart contraction by chemical signal"/>
    <property type="evidence" value="ECO:0007669"/>
    <property type="project" value="Ensembl"/>
</dbReference>
<dbReference type="GO" id="GO:0098911">
    <property type="term" value="P:regulation of ventricular cardiac muscle cell action potential"/>
    <property type="evidence" value="ECO:0007669"/>
    <property type="project" value="Ensembl"/>
</dbReference>
<dbReference type="GO" id="GO:0009617">
    <property type="term" value="P:response to bacterium"/>
    <property type="evidence" value="ECO:0007669"/>
    <property type="project" value="Ensembl"/>
</dbReference>
<dbReference type="GO" id="GO:0051592">
    <property type="term" value="P:response to calcium ion"/>
    <property type="evidence" value="ECO:0007669"/>
    <property type="project" value="Ensembl"/>
</dbReference>
<dbReference type="GO" id="GO:0043627">
    <property type="term" value="P:response to estrogen"/>
    <property type="evidence" value="ECO:0007669"/>
    <property type="project" value="Ensembl"/>
</dbReference>
<dbReference type="GO" id="GO:0001666">
    <property type="term" value="P:response to hypoxia"/>
    <property type="evidence" value="ECO:0007669"/>
    <property type="project" value="Ensembl"/>
</dbReference>
<dbReference type="GO" id="GO:0002931">
    <property type="term" value="P:response to ischemia"/>
    <property type="evidence" value="ECO:0007669"/>
    <property type="project" value="Ensembl"/>
</dbReference>
<dbReference type="GO" id="GO:0032570">
    <property type="term" value="P:response to progesterone"/>
    <property type="evidence" value="ECO:0007669"/>
    <property type="project" value="Ensembl"/>
</dbReference>
<dbReference type="GO" id="GO:0007519">
    <property type="term" value="P:skeletal muscle tissue development"/>
    <property type="evidence" value="ECO:0007669"/>
    <property type="project" value="Ensembl"/>
</dbReference>
<dbReference type="GO" id="GO:0031295">
    <property type="term" value="P:T cell costimulation"/>
    <property type="evidence" value="ECO:0000250"/>
    <property type="project" value="UniProtKB"/>
</dbReference>
<dbReference type="GO" id="GO:0006641">
    <property type="term" value="P:triglyceride metabolic process"/>
    <property type="evidence" value="ECO:0007669"/>
    <property type="project" value="Ensembl"/>
</dbReference>
<dbReference type="GO" id="GO:0001570">
    <property type="term" value="P:vasculogenesis"/>
    <property type="evidence" value="ECO:0007669"/>
    <property type="project" value="Ensembl"/>
</dbReference>
<dbReference type="GO" id="GO:0042310">
    <property type="term" value="P:vasoconstriction"/>
    <property type="evidence" value="ECO:0007669"/>
    <property type="project" value="Ensembl"/>
</dbReference>
<dbReference type="InterPro" id="IPR001612">
    <property type="entry name" value="Caveolin"/>
</dbReference>
<dbReference type="InterPro" id="IPR018361">
    <property type="entry name" value="Caveolin_CS"/>
</dbReference>
<dbReference type="PANTHER" id="PTHR10844">
    <property type="entry name" value="CAVEOLIN"/>
    <property type="match status" value="1"/>
</dbReference>
<dbReference type="PANTHER" id="PTHR10844:SF18">
    <property type="entry name" value="CAVEOLIN-1"/>
    <property type="match status" value="1"/>
</dbReference>
<dbReference type="Pfam" id="PF01146">
    <property type="entry name" value="Caveolin"/>
    <property type="match status" value="1"/>
</dbReference>
<dbReference type="PROSITE" id="PS01210">
    <property type="entry name" value="CAVEOLIN"/>
    <property type="match status" value="1"/>
</dbReference>
<reference key="1">
    <citation type="submission" date="2011-03" db="EMBL/GenBank/DDBJ databases">
        <title>Version 3 of the genome sequence of Otolemur garnettii(Bushbaby).</title>
        <authorList>
            <consortium name="The Broad Institute Genome Sequencing Platform"/>
            <person name="Di Palma F."/>
            <person name="Johnson J."/>
            <person name="Lander E.S."/>
            <person name="Lindblad-Toh K."/>
            <person name="Jaffe D.B."/>
            <person name="Gnerre S."/>
            <person name="MacCallum I."/>
            <person name="Przybylski D."/>
            <person name="Ribeiro F.J."/>
            <person name="Burton J.N."/>
            <person name="Walker B.J."/>
            <person name="Sharpe T."/>
            <person name="Hall G."/>
        </authorList>
    </citation>
    <scope>NUCLEOTIDE SEQUENCE [LARGE SCALE GENOMIC DNA]</scope>
</reference>
<sequence length="178" mass="20593">MSGGKYVDSEGHLYTVPIREQGNIYKPNNKAMAEEVNEKQVYDAHTKEIDLVNRDPKHLNDDVVKIDFEDVIAEPEGTHSFDGIWKASFTTFTVTKYWFYRLLSALFGIPMALIWGIYFAILSFLHIWAVVPCIKSFLIEIQCISRVYSIYVHTFCDPLFEAIGKIFSNIRINMQKEI</sequence>
<organism>
    <name type="scientific">Otolemur garnettii</name>
    <name type="common">Small-eared galago</name>
    <name type="synonym">Garnett's greater bushbaby</name>
    <dbReference type="NCBI Taxonomy" id="30611"/>
    <lineage>
        <taxon>Eukaryota</taxon>
        <taxon>Metazoa</taxon>
        <taxon>Chordata</taxon>
        <taxon>Craniata</taxon>
        <taxon>Vertebrata</taxon>
        <taxon>Euteleostomi</taxon>
        <taxon>Mammalia</taxon>
        <taxon>Eutheria</taxon>
        <taxon>Euarchontoglires</taxon>
        <taxon>Primates</taxon>
        <taxon>Strepsirrhini</taxon>
        <taxon>Lorisiformes</taxon>
        <taxon>Galagidae</taxon>
        <taxon>Otolemur</taxon>
    </lineage>
</organism>
<name>CAV1_OTOGA</name>
<proteinExistence type="inferred from homology"/>
<feature type="initiator methionine" description="Removed" evidence="4">
    <location>
        <position position="1"/>
    </location>
</feature>
<feature type="chain" id="PRO_0000226334" description="Caveolin-1">
    <location>
        <begin position="2"/>
        <end position="178"/>
    </location>
</feature>
<feature type="topological domain" description="Cytoplasmic" evidence="6">
    <location>
        <begin position="2"/>
        <end position="104"/>
    </location>
</feature>
<feature type="intramembrane region" description="Helical" evidence="6">
    <location>
        <begin position="105"/>
        <end position="125"/>
    </location>
</feature>
<feature type="topological domain" description="Cytoplasmic" evidence="6">
    <location>
        <begin position="126"/>
        <end position="178"/>
    </location>
</feature>
<feature type="region of interest" description="Required for homooligomerization" evidence="4">
    <location>
        <begin position="2"/>
        <end position="94"/>
    </location>
</feature>
<feature type="region of interest" description="Interaction with CAVIN3" evidence="4">
    <location>
        <begin position="82"/>
        <end position="94"/>
    </location>
</feature>
<feature type="region of interest" description="Interacts with SPRY1, SPRY2, SPRY3 and SPRY4" evidence="3">
    <location>
        <begin position="131"/>
        <end position="142"/>
    </location>
</feature>
<feature type="region of interest" description="Interacts with SPRY1, SPRY2, and SPRY4" evidence="3">
    <location>
        <begin position="149"/>
        <end position="160"/>
    </location>
</feature>
<feature type="region of interest" description="Interacts with SPRY1, SPRY2, SPRY3 and SPRY4" evidence="3">
    <location>
        <begin position="167"/>
        <end position="178"/>
    </location>
</feature>
<feature type="modified residue" description="N-acetylserine" evidence="4">
    <location>
        <position position="2"/>
    </location>
</feature>
<feature type="modified residue" description="Phosphoserine" evidence="2">
    <location>
        <position position="2"/>
    </location>
</feature>
<feature type="modified residue" description="N6-acetyllysine; alternate" evidence="4">
    <location>
        <position position="5"/>
    </location>
</feature>
<feature type="modified residue" description="Phosphotyrosine" evidence="4">
    <location>
        <position position="6"/>
    </location>
</feature>
<feature type="modified residue" description="Phosphoserine" evidence="3">
    <location>
        <position position="9"/>
    </location>
</feature>
<feature type="modified residue" description="Phosphotyrosine; by ABL1" evidence="3">
    <location>
        <position position="14"/>
    </location>
</feature>
<feature type="modified residue" description="Phosphotyrosine" evidence="4">
    <location>
        <position position="25"/>
    </location>
</feature>
<feature type="lipid moiety-binding region" description="S-palmitoyl cysteine" evidence="1">
    <location>
        <position position="133"/>
    </location>
</feature>
<feature type="lipid moiety-binding region" description="S-palmitoyl cysteine" evidence="1">
    <location>
        <position position="143"/>
    </location>
</feature>
<feature type="lipid moiety-binding region" description="S-palmitoyl cysteine" evidence="1">
    <location>
        <position position="156"/>
    </location>
</feature>
<feature type="cross-link" description="Glycyl lysine isopeptide (Lys-Gly) (interchain with G-Cter in ubiquitin); alternate" evidence="4">
    <location>
        <position position="5"/>
    </location>
</feature>
<feature type="cross-link" description="Glycyl lysine isopeptide (Lys-Gly) (interchain with G-Cter in ubiquitin)" evidence="4">
    <location>
        <position position="26"/>
    </location>
</feature>
<feature type="cross-link" description="Glycyl lysine isopeptide (Lys-Gly) (interchain with G-Cter in ubiquitin)" evidence="4">
    <location>
        <position position="30"/>
    </location>
</feature>
<feature type="cross-link" description="Glycyl lysine isopeptide (Lys-Gly) (interchain with G-Cter in ubiquitin)" evidence="4">
    <location>
        <position position="39"/>
    </location>
</feature>
<feature type="cross-link" description="Glycyl lysine isopeptide (Lys-Gly) (interchain with G-Cter in ubiquitin)" evidence="4">
    <location>
        <position position="47"/>
    </location>
</feature>
<feature type="cross-link" description="Glycyl lysine isopeptide (Lys-Gly) (interchain with G-Cter in ubiquitin)" evidence="4">
    <location>
        <position position="57"/>
    </location>
</feature>